<name>TIG_CAMJR</name>
<feature type="chain" id="PRO_0000179330" description="Trigger factor">
    <location>
        <begin position="1"/>
        <end position="444"/>
    </location>
</feature>
<feature type="domain" description="PPIase FKBP-type" evidence="1">
    <location>
        <begin position="165"/>
        <end position="250"/>
    </location>
</feature>
<proteinExistence type="inferred from homology"/>
<evidence type="ECO:0000255" key="1">
    <source>
        <dbReference type="HAMAP-Rule" id="MF_00303"/>
    </source>
</evidence>
<organism>
    <name type="scientific">Campylobacter jejuni (strain RM1221)</name>
    <dbReference type="NCBI Taxonomy" id="195099"/>
    <lineage>
        <taxon>Bacteria</taxon>
        <taxon>Pseudomonadati</taxon>
        <taxon>Campylobacterota</taxon>
        <taxon>Epsilonproteobacteria</taxon>
        <taxon>Campylobacterales</taxon>
        <taxon>Campylobacteraceae</taxon>
        <taxon>Campylobacter</taxon>
    </lineage>
</organism>
<protein>
    <recommendedName>
        <fullName evidence="1">Trigger factor</fullName>
        <shortName evidence="1">TF</shortName>
        <ecNumber evidence="1">5.2.1.8</ecNumber>
    </recommendedName>
    <alternativeName>
        <fullName evidence="1">PPIase</fullName>
    </alternativeName>
</protein>
<comment type="function">
    <text evidence="1">Involved in protein export. Acts as a chaperone by maintaining the newly synthesized protein in an open conformation. Functions as a peptidyl-prolyl cis-trans isomerase.</text>
</comment>
<comment type="catalytic activity">
    <reaction evidence="1">
        <text>[protein]-peptidylproline (omega=180) = [protein]-peptidylproline (omega=0)</text>
        <dbReference type="Rhea" id="RHEA:16237"/>
        <dbReference type="Rhea" id="RHEA-COMP:10747"/>
        <dbReference type="Rhea" id="RHEA-COMP:10748"/>
        <dbReference type="ChEBI" id="CHEBI:83833"/>
        <dbReference type="ChEBI" id="CHEBI:83834"/>
        <dbReference type="EC" id="5.2.1.8"/>
    </reaction>
</comment>
<comment type="subcellular location">
    <subcellularLocation>
        <location>Cytoplasm</location>
    </subcellularLocation>
    <text evidence="1">About half TF is bound to the ribosome near the polypeptide exit tunnel while the other half is free in the cytoplasm.</text>
</comment>
<comment type="domain">
    <text evidence="1">Consists of 3 domains; the N-terminus binds the ribosome, the middle domain has PPIase activity, while the C-terminus has intrinsic chaperone activity on its own.</text>
</comment>
<comment type="similarity">
    <text evidence="1">Belongs to the FKBP-type PPIase family. Tig subfamily.</text>
</comment>
<gene>
    <name evidence="1" type="primary">tig</name>
    <name type="ordered locus">CJE0186</name>
</gene>
<reference key="1">
    <citation type="journal article" date="2005" name="PLoS Biol.">
        <title>Major structural differences and novel potential virulence mechanisms from the genomes of multiple Campylobacter species.</title>
        <authorList>
            <person name="Fouts D.E."/>
            <person name="Mongodin E.F."/>
            <person name="Mandrell R.E."/>
            <person name="Miller W.G."/>
            <person name="Rasko D.A."/>
            <person name="Ravel J."/>
            <person name="Brinkac L.M."/>
            <person name="DeBoy R.T."/>
            <person name="Parker C.T."/>
            <person name="Daugherty S.C."/>
            <person name="Dodson R.J."/>
            <person name="Durkin A.S."/>
            <person name="Madupu R."/>
            <person name="Sullivan S.A."/>
            <person name="Shetty J.U."/>
            <person name="Ayodeji M.A."/>
            <person name="Shvartsbeyn A."/>
            <person name="Schatz M.C."/>
            <person name="Badger J.H."/>
            <person name="Fraser C.M."/>
            <person name="Nelson K.E."/>
        </authorList>
    </citation>
    <scope>NUCLEOTIDE SEQUENCE [LARGE SCALE GENOMIC DNA]</scope>
    <source>
        <strain>RM1221</strain>
    </source>
</reference>
<dbReference type="EC" id="5.2.1.8" evidence="1"/>
<dbReference type="EMBL" id="CP000025">
    <property type="protein sequence ID" value="AAW34781.1"/>
    <property type="molecule type" value="Genomic_DNA"/>
</dbReference>
<dbReference type="RefSeq" id="WP_002851938.1">
    <property type="nucleotide sequence ID" value="NC_003912.7"/>
</dbReference>
<dbReference type="SMR" id="Q5HWX5"/>
<dbReference type="KEGG" id="cjr:CJE0186"/>
<dbReference type="HOGENOM" id="CLU_033058_2_2_7"/>
<dbReference type="GO" id="GO:0005737">
    <property type="term" value="C:cytoplasm"/>
    <property type="evidence" value="ECO:0007669"/>
    <property type="project" value="UniProtKB-SubCell"/>
</dbReference>
<dbReference type="GO" id="GO:0003755">
    <property type="term" value="F:peptidyl-prolyl cis-trans isomerase activity"/>
    <property type="evidence" value="ECO:0007669"/>
    <property type="project" value="UniProtKB-UniRule"/>
</dbReference>
<dbReference type="GO" id="GO:0051301">
    <property type="term" value="P:cell division"/>
    <property type="evidence" value="ECO:0007669"/>
    <property type="project" value="UniProtKB-KW"/>
</dbReference>
<dbReference type="GO" id="GO:0006457">
    <property type="term" value="P:protein folding"/>
    <property type="evidence" value="ECO:0007669"/>
    <property type="project" value="UniProtKB-UniRule"/>
</dbReference>
<dbReference type="GO" id="GO:0015031">
    <property type="term" value="P:protein transport"/>
    <property type="evidence" value="ECO:0007669"/>
    <property type="project" value="UniProtKB-UniRule"/>
</dbReference>
<dbReference type="FunFam" id="3.10.50.40:FF:000001">
    <property type="entry name" value="Trigger factor"/>
    <property type="match status" value="1"/>
</dbReference>
<dbReference type="Gene3D" id="3.10.50.40">
    <property type="match status" value="1"/>
</dbReference>
<dbReference type="Gene3D" id="3.30.70.1050">
    <property type="entry name" value="Trigger factor ribosome-binding domain"/>
    <property type="match status" value="1"/>
</dbReference>
<dbReference type="Gene3D" id="1.10.3120.10">
    <property type="entry name" value="Trigger factor, C-terminal domain"/>
    <property type="match status" value="1"/>
</dbReference>
<dbReference type="HAMAP" id="MF_00303">
    <property type="entry name" value="Trigger_factor_Tig"/>
    <property type="match status" value="1"/>
</dbReference>
<dbReference type="InterPro" id="IPR046357">
    <property type="entry name" value="PPIase_dom_sf"/>
</dbReference>
<dbReference type="InterPro" id="IPR001179">
    <property type="entry name" value="PPIase_FKBP_dom"/>
</dbReference>
<dbReference type="InterPro" id="IPR005215">
    <property type="entry name" value="Trig_fac"/>
</dbReference>
<dbReference type="InterPro" id="IPR008880">
    <property type="entry name" value="Trigger_fac_C"/>
</dbReference>
<dbReference type="InterPro" id="IPR037041">
    <property type="entry name" value="Trigger_fac_C_sf"/>
</dbReference>
<dbReference type="InterPro" id="IPR008881">
    <property type="entry name" value="Trigger_fac_ribosome-bd_bac"/>
</dbReference>
<dbReference type="InterPro" id="IPR036611">
    <property type="entry name" value="Trigger_fac_ribosome-bd_sf"/>
</dbReference>
<dbReference type="InterPro" id="IPR027304">
    <property type="entry name" value="Trigger_fact/SurA_dom_sf"/>
</dbReference>
<dbReference type="NCBIfam" id="TIGR00115">
    <property type="entry name" value="tig"/>
    <property type="match status" value="1"/>
</dbReference>
<dbReference type="Pfam" id="PF00254">
    <property type="entry name" value="FKBP_C"/>
    <property type="match status" value="1"/>
</dbReference>
<dbReference type="Pfam" id="PF05698">
    <property type="entry name" value="Trigger_C"/>
    <property type="match status" value="1"/>
</dbReference>
<dbReference type="Pfam" id="PF05697">
    <property type="entry name" value="Trigger_N"/>
    <property type="match status" value="1"/>
</dbReference>
<dbReference type="PIRSF" id="PIRSF003095">
    <property type="entry name" value="Trigger_factor"/>
    <property type="match status" value="1"/>
</dbReference>
<dbReference type="SUPFAM" id="SSF54534">
    <property type="entry name" value="FKBP-like"/>
    <property type="match status" value="1"/>
</dbReference>
<dbReference type="SUPFAM" id="SSF109998">
    <property type="entry name" value="Triger factor/SurA peptide-binding domain-like"/>
    <property type="match status" value="1"/>
</dbReference>
<dbReference type="SUPFAM" id="SSF102735">
    <property type="entry name" value="Trigger factor ribosome-binding domain"/>
    <property type="match status" value="1"/>
</dbReference>
<dbReference type="PROSITE" id="PS50059">
    <property type="entry name" value="FKBP_PPIASE"/>
    <property type="match status" value="1"/>
</dbReference>
<accession>Q5HWX5</accession>
<keyword id="KW-0131">Cell cycle</keyword>
<keyword id="KW-0132">Cell division</keyword>
<keyword id="KW-0143">Chaperone</keyword>
<keyword id="KW-0963">Cytoplasm</keyword>
<keyword id="KW-0413">Isomerase</keyword>
<keyword id="KW-0697">Rotamase</keyword>
<sequence>MEVKAKQLDSVNATASVKIPSGMIKSEVENLAKKASKSVKMDGFRPGKVPVSAVLKRYERELTQDAEQNLFKSAVNSALQELKKENKELVGEPYFEKFDRKDGEIIAELILSFKPEIKLEGYEKLIPEYQTPKVSKKEIDEKKDELLKRFATPEAIKTKRALKEGDFAKFDFEGFVDDKAFEGGKAENYVLEIGSKQFIPGFEDGMVGMKIGEEKDIKVTFPKEYGAAHLAGKDAVFKVKLHEIQELKIPELDDEMLKKLLPGEEKASVEVLDEKLKEQIKNEKLFKLVNDELKGKFADALIEKYNFDLPKGIVEQETDMQMRAAFNTFSEKEIEELKASKEKYQEKRDSFKEEAQKSVKLTFIIDELAKLRKIEVNDQELIQAIYFEAYRYGMNPKEHLENYKKQGALPAVKMALIEEKLFNDIFIPKTEKSEKVSKKEKEDK</sequence>